<proteinExistence type="inferred from homology"/>
<name>RS10_STRZJ</name>
<evidence type="ECO:0000255" key="1">
    <source>
        <dbReference type="HAMAP-Rule" id="MF_00508"/>
    </source>
</evidence>
<evidence type="ECO:0000305" key="2"/>
<protein>
    <recommendedName>
        <fullName evidence="1">Small ribosomal subunit protein uS10</fullName>
    </recommendedName>
    <alternativeName>
        <fullName evidence="2">30S ribosomal protein S10</fullName>
    </alternativeName>
</protein>
<dbReference type="EMBL" id="CP000919">
    <property type="protein sequence ID" value="ACO19199.1"/>
    <property type="molecule type" value="Genomic_DNA"/>
</dbReference>
<dbReference type="RefSeq" id="WP_001284513.1">
    <property type="nucleotide sequence ID" value="NC_012466.1"/>
</dbReference>
<dbReference type="SMR" id="C1CC05"/>
<dbReference type="GeneID" id="93738956"/>
<dbReference type="KEGG" id="sjj:SPJ_0218"/>
<dbReference type="HOGENOM" id="CLU_122625_1_3_9"/>
<dbReference type="Proteomes" id="UP000002206">
    <property type="component" value="Chromosome"/>
</dbReference>
<dbReference type="GO" id="GO:1990904">
    <property type="term" value="C:ribonucleoprotein complex"/>
    <property type="evidence" value="ECO:0007669"/>
    <property type="project" value="UniProtKB-KW"/>
</dbReference>
<dbReference type="GO" id="GO:0005840">
    <property type="term" value="C:ribosome"/>
    <property type="evidence" value="ECO:0007669"/>
    <property type="project" value="UniProtKB-KW"/>
</dbReference>
<dbReference type="GO" id="GO:0003735">
    <property type="term" value="F:structural constituent of ribosome"/>
    <property type="evidence" value="ECO:0007669"/>
    <property type="project" value="InterPro"/>
</dbReference>
<dbReference type="GO" id="GO:0000049">
    <property type="term" value="F:tRNA binding"/>
    <property type="evidence" value="ECO:0007669"/>
    <property type="project" value="UniProtKB-UniRule"/>
</dbReference>
<dbReference type="GO" id="GO:0006412">
    <property type="term" value="P:translation"/>
    <property type="evidence" value="ECO:0007669"/>
    <property type="project" value="UniProtKB-UniRule"/>
</dbReference>
<dbReference type="FunFam" id="3.30.70.600:FF:000001">
    <property type="entry name" value="30S ribosomal protein S10"/>
    <property type="match status" value="1"/>
</dbReference>
<dbReference type="Gene3D" id="3.30.70.600">
    <property type="entry name" value="Ribosomal protein S10 domain"/>
    <property type="match status" value="1"/>
</dbReference>
<dbReference type="HAMAP" id="MF_00508">
    <property type="entry name" value="Ribosomal_uS10"/>
    <property type="match status" value="1"/>
</dbReference>
<dbReference type="InterPro" id="IPR001848">
    <property type="entry name" value="Ribosomal_uS10"/>
</dbReference>
<dbReference type="InterPro" id="IPR018268">
    <property type="entry name" value="Ribosomal_uS10_CS"/>
</dbReference>
<dbReference type="InterPro" id="IPR027486">
    <property type="entry name" value="Ribosomal_uS10_dom"/>
</dbReference>
<dbReference type="InterPro" id="IPR036838">
    <property type="entry name" value="Ribosomal_uS10_dom_sf"/>
</dbReference>
<dbReference type="NCBIfam" id="NF001861">
    <property type="entry name" value="PRK00596.1"/>
    <property type="match status" value="1"/>
</dbReference>
<dbReference type="NCBIfam" id="TIGR01049">
    <property type="entry name" value="rpsJ_bact"/>
    <property type="match status" value="1"/>
</dbReference>
<dbReference type="PANTHER" id="PTHR11700">
    <property type="entry name" value="30S RIBOSOMAL PROTEIN S10 FAMILY MEMBER"/>
    <property type="match status" value="1"/>
</dbReference>
<dbReference type="Pfam" id="PF00338">
    <property type="entry name" value="Ribosomal_S10"/>
    <property type="match status" value="1"/>
</dbReference>
<dbReference type="PRINTS" id="PR00971">
    <property type="entry name" value="RIBOSOMALS10"/>
</dbReference>
<dbReference type="SMART" id="SM01403">
    <property type="entry name" value="Ribosomal_S10"/>
    <property type="match status" value="1"/>
</dbReference>
<dbReference type="SUPFAM" id="SSF54999">
    <property type="entry name" value="Ribosomal protein S10"/>
    <property type="match status" value="1"/>
</dbReference>
<dbReference type="PROSITE" id="PS00361">
    <property type="entry name" value="RIBOSOMAL_S10"/>
    <property type="match status" value="1"/>
</dbReference>
<organism>
    <name type="scientific">Streptococcus pneumoniae (strain JJA)</name>
    <dbReference type="NCBI Taxonomy" id="488222"/>
    <lineage>
        <taxon>Bacteria</taxon>
        <taxon>Bacillati</taxon>
        <taxon>Bacillota</taxon>
        <taxon>Bacilli</taxon>
        <taxon>Lactobacillales</taxon>
        <taxon>Streptococcaceae</taxon>
        <taxon>Streptococcus</taxon>
    </lineage>
</organism>
<comment type="function">
    <text evidence="1">Involved in the binding of tRNA to the ribosomes.</text>
</comment>
<comment type="subunit">
    <text evidence="1">Part of the 30S ribosomal subunit.</text>
</comment>
<comment type="similarity">
    <text evidence="1">Belongs to the universal ribosomal protein uS10 family.</text>
</comment>
<feature type="chain" id="PRO_1000146081" description="Small ribosomal subunit protein uS10">
    <location>
        <begin position="1"/>
        <end position="102"/>
    </location>
</feature>
<keyword id="KW-0687">Ribonucleoprotein</keyword>
<keyword id="KW-0689">Ribosomal protein</keyword>
<accession>C1CC05</accession>
<sequence length="102" mass="11583">MANKKIRIRLKAYEHRTLDTAAAKIVESATRTGAQVAGPIPLPTERSLYTIIRATHKYKDSREQFEMRTHKRLIDIVNPTQKTVDALMKLDLPSGVNVEIKL</sequence>
<gene>
    <name evidence="1" type="primary">rpsJ</name>
    <name type="ordered locus">SPJ_0218</name>
</gene>
<reference key="1">
    <citation type="journal article" date="2010" name="Genome Biol.">
        <title>Structure and dynamics of the pan-genome of Streptococcus pneumoniae and closely related species.</title>
        <authorList>
            <person name="Donati C."/>
            <person name="Hiller N.L."/>
            <person name="Tettelin H."/>
            <person name="Muzzi A."/>
            <person name="Croucher N.J."/>
            <person name="Angiuoli S.V."/>
            <person name="Oggioni M."/>
            <person name="Dunning Hotopp J.C."/>
            <person name="Hu F.Z."/>
            <person name="Riley D.R."/>
            <person name="Covacci A."/>
            <person name="Mitchell T.J."/>
            <person name="Bentley S.D."/>
            <person name="Kilian M."/>
            <person name="Ehrlich G.D."/>
            <person name="Rappuoli R."/>
            <person name="Moxon E.R."/>
            <person name="Masignani V."/>
        </authorList>
    </citation>
    <scope>NUCLEOTIDE SEQUENCE [LARGE SCALE GENOMIC DNA]</scope>
    <source>
        <strain>JJA</strain>
    </source>
</reference>